<keyword id="KW-0143">Chaperone</keyword>
<keyword id="KW-0963">Cytoplasm</keyword>
<keyword id="KW-0653">Protein transport</keyword>
<keyword id="KW-1185">Reference proteome</keyword>
<keyword id="KW-0811">Translocation</keyword>
<keyword id="KW-0813">Transport</keyword>
<feature type="chain" id="PRO_1000195350" description="Protein-export protein SecB">
    <location>
        <begin position="1"/>
        <end position="172"/>
    </location>
</feature>
<organism>
    <name type="scientific">Stenotrophomonas maltophilia (strain K279a)</name>
    <dbReference type="NCBI Taxonomy" id="522373"/>
    <lineage>
        <taxon>Bacteria</taxon>
        <taxon>Pseudomonadati</taxon>
        <taxon>Pseudomonadota</taxon>
        <taxon>Gammaproteobacteria</taxon>
        <taxon>Lysobacterales</taxon>
        <taxon>Lysobacteraceae</taxon>
        <taxon>Stenotrophomonas</taxon>
        <taxon>Stenotrophomonas maltophilia group</taxon>
    </lineage>
</organism>
<sequence length="172" mass="18512">MSEEITNGAAAPVDAATGPAFTVEKIYVKDVSFESPNAPTIFNDQVQPELQLNLNQQVQRLGENAFEVVLAVTLTCQAGERTAYVAEVKQAGVFGLVGLDPQSIDVLLGTQCPNILFPYVRQLISDLIQAGGFPPFFLQPINFEGLYAETLRQRQEQGDAPSLADSEPAGNA</sequence>
<comment type="function">
    <text evidence="1">One of the proteins required for the normal export of preproteins out of the cell cytoplasm. It is a molecular chaperone that binds to a subset of precursor proteins, maintaining them in a translocation-competent state. It also specifically binds to its receptor SecA.</text>
</comment>
<comment type="subunit">
    <text evidence="1">Homotetramer, a dimer of dimers. One homotetramer interacts with 1 SecA dimer.</text>
</comment>
<comment type="subcellular location">
    <subcellularLocation>
        <location evidence="1">Cytoplasm</location>
    </subcellularLocation>
</comment>
<comment type="similarity">
    <text evidence="1">Belongs to the SecB family.</text>
</comment>
<dbReference type="EMBL" id="AM743169">
    <property type="protein sequence ID" value="CAQ43780.1"/>
    <property type="molecule type" value="Genomic_DNA"/>
</dbReference>
<dbReference type="RefSeq" id="WP_005407596.1">
    <property type="nucleotide sequence ID" value="NC_010943.1"/>
</dbReference>
<dbReference type="SMR" id="B2FHD7"/>
<dbReference type="EnsemblBacteria" id="CAQ43780">
    <property type="protein sequence ID" value="CAQ43780"/>
    <property type="gene ID" value="Smlt0171"/>
</dbReference>
<dbReference type="GeneID" id="97259310"/>
<dbReference type="KEGG" id="sml:Smlt0171"/>
<dbReference type="eggNOG" id="COG1952">
    <property type="taxonomic scope" value="Bacteria"/>
</dbReference>
<dbReference type="HOGENOM" id="CLU_111574_1_0_6"/>
<dbReference type="Proteomes" id="UP000008840">
    <property type="component" value="Chromosome"/>
</dbReference>
<dbReference type="GO" id="GO:0005737">
    <property type="term" value="C:cytoplasm"/>
    <property type="evidence" value="ECO:0007669"/>
    <property type="project" value="UniProtKB-SubCell"/>
</dbReference>
<dbReference type="GO" id="GO:0051082">
    <property type="term" value="F:unfolded protein binding"/>
    <property type="evidence" value="ECO:0007669"/>
    <property type="project" value="InterPro"/>
</dbReference>
<dbReference type="GO" id="GO:0006457">
    <property type="term" value="P:protein folding"/>
    <property type="evidence" value="ECO:0007669"/>
    <property type="project" value="UniProtKB-UniRule"/>
</dbReference>
<dbReference type="GO" id="GO:0051262">
    <property type="term" value="P:protein tetramerization"/>
    <property type="evidence" value="ECO:0007669"/>
    <property type="project" value="InterPro"/>
</dbReference>
<dbReference type="GO" id="GO:0015031">
    <property type="term" value="P:protein transport"/>
    <property type="evidence" value="ECO:0007669"/>
    <property type="project" value="UniProtKB-UniRule"/>
</dbReference>
<dbReference type="Gene3D" id="3.10.420.10">
    <property type="entry name" value="SecB-like"/>
    <property type="match status" value="1"/>
</dbReference>
<dbReference type="HAMAP" id="MF_00821">
    <property type="entry name" value="SecB"/>
    <property type="match status" value="1"/>
</dbReference>
<dbReference type="InterPro" id="IPR003708">
    <property type="entry name" value="SecB"/>
</dbReference>
<dbReference type="InterPro" id="IPR035958">
    <property type="entry name" value="SecB-like_sf"/>
</dbReference>
<dbReference type="NCBIfam" id="NF004391">
    <property type="entry name" value="PRK05751.1-2"/>
    <property type="match status" value="1"/>
</dbReference>
<dbReference type="NCBIfam" id="NF004392">
    <property type="entry name" value="PRK05751.1-3"/>
    <property type="match status" value="1"/>
</dbReference>
<dbReference type="NCBIfam" id="NF004393">
    <property type="entry name" value="PRK05751.1-4"/>
    <property type="match status" value="1"/>
</dbReference>
<dbReference type="NCBIfam" id="TIGR00809">
    <property type="entry name" value="secB"/>
    <property type="match status" value="1"/>
</dbReference>
<dbReference type="PANTHER" id="PTHR36918">
    <property type="match status" value="1"/>
</dbReference>
<dbReference type="PANTHER" id="PTHR36918:SF1">
    <property type="entry name" value="PROTEIN-EXPORT PROTEIN SECB"/>
    <property type="match status" value="1"/>
</dbReference>
<dbReference type="Pfam" id="PF02556">
    <property type="entry name" value="SecB"/>
    <property type="match status" value="1"/>
</dbReference>
<dbReference type="PRINTS" id="PR01594">
    <property type="entry name" value="SECBCHAPRONE"/>
</dbReference>
<dbReference type="SUPFAM" id="SSF54611">
    <property type="entry name" value="SecB-like"/>
    <property type="match status" value="1"/>
</dbReference>
<name>SECB_STRMK</name>
<proteinExistence type="inferred from homology"/>
<accession>B2FHD7</accession>
<evidence type="ECO:0000255" key="1">
    <source>
        <dbReference type="HAMAP-Rule" id="MF_00821"/>
    </source>
</evidence>
<protein>
    <recommendedName>
        <fullName evidence="1">Protein-export protein SecB</fullName>
    </recommendedName>
</protein>
<reference key="1">
    <citation type="journal article" date="2008" name="Genome Biol.">
        <title>The complete genome, comparative and functional analysis of Stenotrophomonas maltophilia reveals an organism heavily shielded by drug resistance determinants.</title>
        <authorList>
            <person name="Crossman L.C."/>
            <person name="Gould V.C."/>
            <person name="Dow J.M."/>
            <person name="Vernikos G.S."/>
            <person name="Okazaki A."/>
            <person name="Sebaihia M."/>
            <person name="Saunders D."/>
            <person name="Arrowsmith C."/>
            <person name="Carver T."/>
            <person name="Peters N."/>
            <person name="Adlem E."/>
            <person name="Kerhornou A."/>
            <person name="Lord A."/>
            <person name="Murphy L."/>
            <person name="Seeger K."/>
            <person name="Squares R."/>
            <person name="Rutter S."/>
            <person name="Quail M.A."/>
            <person name="Rajandream M.A."/>
            <person name="Harris D."/>
            <person name="Churcher C."/>
            <person name="Bentley S.D."/>
            <person name="Parkhill J."/>
            <person name="Thomson N.R."/>
            <person name="Avison M.B."/>
        </authorList>
    </citation>
    <scope>NUCLEOTIDE SEQUENCE [LARGE SCALE GENOMIC DNA]</scope>
    <source>
        <strain>K279a</strain>
    </source>
</reference>
<gene>
    <name evidence="1" type="primary">secB</name>
    <name type="ordered locus">Smlt0171</name>
</gene>